<accession>O29853</accession>
<evidence type="ECO:0000255" key="1">
    <source>
        <dbReference type="PROSITE-ProRule" id="PRU00718"/>
    </source>
</evidence>
<evidence type="ECO:0000269" key="2">
    <source>
    </source>
</evidence>
<evidence type="ECO:0000269" key="3">
    <source>
    </source>
</evidence>
<evidence type="ECO:0000303" key="4">
    <source>
    </source>
</evidence>
<evidence type="ECO:0000303" key="5">
    <source>
    </source>
</evidence>
<evidence type="ECO:0000305" key="6"/>
<evidence type="ECO:0000305" key="7">
    <source>
    </source>
</evidence>
<evidence type="ECO:0000312" key="8">
    <source>
        <dbReference type="EMBL" id="AAB90839.1"/>
    </source>
</evidence>
<reference key="1">
    <citation type="journal article" date="1997" name="Nature">
        <title>The complete genome sequence of the hyperthermophilic, sulphate-reducing archaeon Archaeoglobus fulgidus.</title>
        <authorList>
            <person name="Klenk H.-P."/>
            <person name="Clayton R.A."/>
            <person name="Tomb J.-F."/>
            <person name="White O."/>
            <person name="Nelson K.E."/>
            <person name="Ketchum K.A."/>
            <person name="Dodson R.J."/>
            <person name="Gwinn M.L."/>
            <person name="Hickey E.K."/>
            <person name="Peterson J.D."/>
            <person name="Richardson D.L."/>
            <person name="Kerlavage A.R."/>
            <person name="Graham D.E."/>
            <person name="Kyrpides N.C."/>
            <person name="Fleischmann R.D."/>
            <person name="Quackenbush J."/>
            <person name="Lee N.H."/>
            <person name="Sutton G.G."/>
            <person name="Gill S.R."/>
            <person name="Kirkness E.F."/>
            <person name="Dougherty B.A."/>
            <person name="McKenney K."/>
            <person name="Adams M.D."/>
            <person name="Loftus B.J."/>
            <person name="Peterson S.N."/>
            <person name="Reich C.I."/>
            <person name="McNeil L.K."/>
            <person name="Badger J.H."/>
            <person name="Glodek A."/>
            <person name="Zhou L."/>
            <person name="Overbeek R."/>
            <person name="Gocayne J.D."/>
            <person name="Weidman J.F."/>
            <person name="McDonald L.A."/>
            <person name="Utterback T.R."/>
            <person name="Cotton M.D."/>
            <person name="Spriggs T."/>
            <person name="Artiach P."/>
            <person name="Kaine B.P."/>
            <person name="Sykes S.M."/>
            <person name="Sadow P.W."/>
            <person name="D'Andrea K.P."/>
            <person name="Bowman C."/>
            <person name="Fujii C."/>
            <person name="Garland S.A."/>
            <person name="Mason T.M."/>
            <person name="Olsen G.J."/>
            <person name="Fraser C.M."/>
            <person name="Smith H.O."/>
            <person name="Woese C.R."/>
            <person name="Venter J.C."/>
        </authorList>
    </citation>
    <scope>NUCLEOTIDE SEQUENCE [LARGE SCALE GENOMIC DNA]</scope>
    <source>
        <strain>ATCC 49558 / DSM 4304 / JCM 9628 / NBRC 100126 / VC-16</strain>
    </source>
</reference>
<reference key="2">
    <citation type="journal article" date="1999" name="J. Bacteriol.">
        <title>The Archaeoglobus fulgidus D-lactate dehydrogenase is a Zn(2+) flavoprotein.</title>
        <authorList>
            <person name="Reed D.W."/>
            <person name="Hartzell P.L."/>
        </authorList>
    </citation>
    <scope>FUNCTION</scope>
    <scope>CATALYTIC ACTIVITY</scope>
    <scope>COFACTOR</scope>
    <scope>BIOPHYSICOCHEMICAL PROPERTIES</scope>
</reference>
<reference key="3">
    <citation type="journal article" date="2002" name="Archaea">
        <title>Cellular localization of D-lactate dehydrogenase and NADH oxidase from Archaeoglobus fulgidus.</title>
        <authorList>
            <person name="Pagala V.R."/>
            <person name="Park J."/>
            <person name="Reed D.W."/>
            <person name="Hartzell P.L."/>
        </authorList>
    </citation>
    <scope>SUBCELLULAR LOCATION</scope>
    <scope>TOPOLOGY</scope>
    <scope>INDUCTION</scope>
</reference>
<gene>
    <name evidence="4" type="primary">dld</name>
    <name evidence="8" type="ordered locus">AF_0394</name>
</gene>
<name>DLD_ARCFU</name>
<sequence length="443" mass="48487">MSWIDELSKIVEVFPPSDAYRFDETPPLVAPRAAENFVVVKPSNSEEVSAILKFANEKSIPVFMRGGGTGLSGGAVPTEEGIVLSTEKMTELEVDADNRVAICGAGVTLKQLDDAAFRHGLSFPPHPGAETATVGGMIATNAGGVRALKYGTMRNYVLSLEAVLADGRIINVGGKTIKNSSGYSLLHLLVGSEGTLAVITKATIRLFPQMRDMTVLAIPFPTMEDAMNCVVEVARKMLPMALEFMEKRAVEIGEKVSGERWVSREGEAHLLMVFESFDEAEEAAKIAQSLGAIDVYAATTKKDQDRLLKVRGMIYEGLRKEVIEVLDACVPPAKIAEYWRRSNELAEEYGIELITYGHAGDGNVHQHPLVYEGWEKSYFEFRKSLLSLAVSLGGVISGEHGIGAVKLSELEELFPEQFELMRQIKLLFDPKNILNPGKVVRKL</sequence>
<feature type="chain" id="PRO_0000430704" description="D-lactate dehydrogenase">
    <location>
        <begin position="1"/>
        <end position="443"/>
    </location>
</feature>
<feature type="topological domain" description="Extracellular" evidence="5">
    <location>
        <begin position="1"/>
        <end position="182"/>
    </location>
</feature>
<feature type="transmembrane region" description="Helical" evidence="5">
    <location>
        <begin position="183"/>
        <end position="203"/>
    </location>
</feature>
<feature type="topological domain" description="Cytoplasmic" evidence="5">
    <location>
        <begin position="204"/>
        <end position="383"/>
    </location>
</feature>
<feature type="transmembrane region" description="Helical" evidence="5">
    <location>
        <begin position="384"/>
        <end position="404"/>
    </location>
</feature>
<feature type="topological domain" description="Extracellular" evidence="5">
    <location>
        <begin position="405"/>
        <end position="443"/>
    </location>
</feature>
<feature type="domain" description="FAD-binding PCMH-type" evidence="1">
    <location>
        <begin position="32"/>
        <end position="209"/>
    </location>
</feature>
<keyword id="KW-1003">Cell membrane</keyword>
<keyword id="KW-0274">FAD</keyword>
<keyword id="KW-0285">Flavoprotein</keyword>
<keyword id="KW-0472">Membrane</keyword>
<keyword id="KW-0560">Oxidoreductase</keyword>
<keyword id="KW-1185">Reference proteome</keyword>
<keyword id="KW-0812">Transmembrane</keyword>
<keyword id="KW-1133">Transmembrane helix</keyword>
<keyword id="KW-0862">Zinc</keyword>
<dbReference type="EC" id="1.1.99.6" evidence="2"/>
<dbReference type="EMBL" id="AE000782">
    <property type="protein sequence ID" value="AAB90839.1"/>
    <property type="molecule type" value="Genomic_DNA"/>
</dbReference>
<dbReference type="PIR" id="B69299">
    <property type="entry name" value="B69299"/>
</dbReference>
<dbReference type="RefSeq" id="WP_010877901.1">
    <property type="nucleotide sequence ID" value="NC_000917.1"/>
</dbReference>
<dbReference type="SMR" id="O29853"/>
<dbReference type="STRING" id="224325.AF_0394"/>
<dbReference type="PaxDb" id="224325-AF_0394"/>
<dbReference type="EnsemblBacteria" id="AAB90839">
    <property type="protein sequence ID" value="AAB90839"/>
    <property type="gene ID" value="AF_0394"/>
</dbReference>
<dbReference type="GeneID" id="1483609"/>
<dbReference type="KEGG" id="afu:AF_0394"/>
<dbReference type="eggNOG" id="arCOG00337">
    <property type="taxonomic scope" value="Archaea"/>
</dbReference>
<dbReference type="HOGENOM" id="CLU_017779_9_2_2"/>
<dbReference type="OrthoDB" id="26910at2157"/>
<dbReference type="PhylomeDB" id="O29853"/>
<dbReference type="BRENDA" id="1.1.99.6">
    <property type="organism ID" value="414"/>
</dbReference>
<dbReference type="SABIO-RK" id="O29853"/>
<dbReference type="Proteomes" id="UP000002199">
    <property type="component" value="Chromosome"/>
</dbReference>
<dbReference type="GO" id="GO:0005886">
    <property type="term" value="C:plasma membrane"/>
    <property type="evidence" value="ECO:0007669"/>
    <property type="project" value="UniProtKB-SubCell"/>
</dbReference>
<dbReference type="GO" id="GO:0047809">
    <property type="term" value="F:D-2-hydroxy-acid dehydrogenase activity"/>
    <property type="evidence" value="ECO:0000314"/>
    <property type="project" value="UniProtKB"/>
</dbReference>
<dbReference type="GO" id="GO:0071949">
    <property type="term" value="F:FAD binding"/>
    <property type="evidence" value="ECO:0007669"/>
    <property type="project" value="InterPro"/>
</dbReference>
<dbReference type="GO" id="GO:0050660">
    <property type="term" value="F:flavin adenine dinucleotide binding"/>
    <property type="evidence" value="ECO:0000314"/>
    <property type="project" value="UniProtKB"/>
</dbReference>
<dbReference type="FunFam" id="1.10.45.10:FF:000001">
    <property type="entry name" value="D-lactate dehydrogenase mitochondrial"/>
    <property type="match status" value="1"/>
</dbReference>
<dbReference type="FunFam" id="3.30.465.10:FF:000036">
    <property type="entry name" value="Putative FAD-linked oxidoreductase"/>
    <property type="match status" value="1"/>
</dbReference>
<dbReference type="Gene3D" id="3.30.465.10">
    <property type="match status" value="1"/>
</dbReference>
<dbReference type="Gene3D" id="3.30.70.2740">
    <property type="match status" value="1"/>
</dbReference>
<dbReference type="Gene3D" id="1.10.45.10">
    <property type="entry name" value="Vanillyl-alcohol Oxidase, Chain A, domain 4"/>
    <property type="match status" value="1"/>
</dbReference>
<dbReference type="InterPro" id="IPR004113">
    <property type="entry name" value="FAD-bd_oxidored_4_C"/>
</dbReference>
<dbReference type="InterPro" id="IPR016166">
    <property type="entry name" value="FAD-bd_PCMH"/>
</dbReference>
<dbReference type="InterPro" id="IPR036318">
    <property type="entry name" value="FAD-bd_PCMH-like_sf"/>
</dbReference>
<dbReference type="InterPro" id="IPR016169">
    <property type="entry name" value="FAD-bd_PCMH_sub2"/>
</dbReference>
<dbReference type="InterPro" id="IPR016164">
    <property type="entry name" value="FAD-linked_Oxase-like_C"/>
</dbReference>
<dbReference type="InterPro" id="IPR051914">
    <property type="entry name" value="FAD-linked_OxidoTrans_Type4"/>
</dbReference>
<dbReference type="InterPro" id="IPR006094">
    <property type="entry name" value="Oxid_FAD_bind_N"/>
</dbReference>
<dbReference type="InterPro" id="IPR016171">
    <property type="entry name" value="Vanillyl_alc_oxidase_C-sub2"/>
</dbReference>
<dbReference type="PANTHER" id="PTHR42934">
    <property type="entry name" value="GLYCOLATE OXIDASE SUBUNIT GLCD"/>
    <property type="match status" value="1"/>
</dbReference>
<dbReference type="PANTHER" id="PTHR42934:SF2">
    <property type="entry name" value="GLYCOLATE OXIDASE SUBUNIT GLCD"/>
    <property type="match status" value="1"/>
</dbReference>
<dbReference type="Pfam" id="PF02913">
    <property type="entry name" value="FAD-oxidase_C"/>
    <property type="match status" value="1"/>
</dbReference>
<dbReference type="Pfam" id="PF01565">
    <property type="entry name" value="FAD_binding_4"/>
    <property type="match status" value="1"/>
</dbReference>
<dbReference type="SUPFAM" id="SSF56176">
    <property type="entry name" value="FAD-binding/transporter-associated domain-like"/>
    <property type="match status" value="1"/>
</dbReference>
<dbReference type="SUPFAM" id="SSF55103">
    <property type="entry name" value="FAD-linked oxidases, C-terminal domain"/>
    <property type="match status" value="1"/>
</dbReference>
<dbReference type="PROSITE" id="PS51387">
    <property type="entry name" value="FAD_PCMH"/>
    <property type="match status" value="1"/>
</dbReference>
<proteinExistence type="evidence at protein level"/>
<protein>
    <recommendedName>
        <fullName evidence="4">D-lactate dehydrogenase</fullName>
        <ecNumber evidence="2">1.1.99.6</ecNumber>
    </recommendedName>
</protein>
<comment type="function">
    <text evidence="2">Catalyzes the dehydrogenation of (R)-lactate (D-lactate) to pyruvate. Is likely involved in the utilization of D-lactate as a sole source for both carbon and electrons for dissimilatory sulfate reduction. Cannot use L-lactate as substrate, and NAD(+), horse cytochrome c, methylene blue or dimethylnaphthoquinone as acceptors. Active in vitro with artificial electron acceptors such as 2,6-dichlorophenolindophenol (DCPIP); the physiological acceptor is not known, but potential acceptors include cytochromes or quinones.</text>
</comment>
<comment type="catalytic activity">
    <reaction evidence="2">
        <text>(R)-lactate + A = pyruvate + AH2</text>
        <dbReference type="Rhea" id="RHEA:15089"/>
        <dbReference type="ChEBI" id="CHEBI:13193"/>
        <dbReference type="ChEBI" id="CHEBI:15361"/>
        <dbReference type="ChEBI" id="CHEBI:16004"/>
        <dbReference type="ChEBI" id="CHEBI:17499"/>
        <dbReference type="EC" id="1.1.99.6"/>
    </reaction>
    <physiologicalReaction direction="left-to-right" evidence="7">
        <dbReference type="Rhea" id="RHEA:15090"/>
    </physiologicalReaction>
</comment>
<comment type="cofactor">
    <cofactor evidence="2">
        <name>FAD</name>
        <dbReference type="ChEBI" id="CHEBI:57692"/>
    </cofactor>
    <text evidence="2">Binds 1 FAD non-covalently per subunit.</text>
</comment>
<comment type="cofactor">
    <cofactor evidence="2">
        <name>Zn(2+)</name>
        <dbReference type="ChEBI" id="CHEBI:29105"/>
    </cofactor>
    <text evidence="2">Binds 1 Zn(2+) ion per subunit.</text>
</comment>
<comment type="biophysicochemical properties">
    <kinetics>
        <KM evidence="2">150 uM for D-lactate</KM>
    </kinetics>
    <phDependence>
        <text evidence="2">Optimum pH is 8.0.</text>
    </phDependence>
    <temperatureDependence>
        <text evidence="2">Optimum temperature is 90 degrees Celsius.</text>
    </temperatureDependence>
</comment>
<comment type="subcellular location">
    <subcellularLocation>
        <location evidence="3">Cell membrane</location>
        <topology evidence="5">Multi-pass membrane protein</topology>
    </subcellularLocation>
    <text evidence="3">Extracellular part of the protein faces the S-layer.</text>
</comment>
<comment type="induction">
    <text evidence="3">Constitutively expressed.</text>
</comment>
<comment type="similarity">
    <text evidence="6">Belongs to the FAD-binding oxidoreductase/transferase type 4 family.</text>
</comment>
<organism>
    <name type="scientific">Archaeoglobus fulgidus (strain ATCC 49558 / DSM 4304 / JCM 9628 / NBRC 100126 / VC-16)</name>
    <dbReference type="NCBI Taxonomy" id="224325"/>
    <lineage>
        <taxon>Archaea</taxon>
        <taxon>Methanobacteriati</taxon>
        <taxon>Methanobacteriota</taxon>
        <taxon>Archaeoglobi</taxon>
        <taxon>Archaeoglobales</taxon>
        <taxon>Archaeoglobaceae</taxon>
        <taxon>Archaeoglobus</taxon>
    </lineage>
</organism>